<protein>
    <recommendedName>
        <fullName>Putative uncharacterized protein YOR231C-A</fullName>
    </recommendedName>
</protein>
<comment type="miscellaneous">
    <text evidence="1">Completely overlaps MKK1.</text>
</comment>
<comment type="caution">
    <text evidence="2">Product of a dubious gene prediction unlikely to encode a functional protein. Because of that it is not part of the S.cerevisiae S288c complete/reference proteome set.</text>
</comment>
<sequence>MCLSLLKRIFLIHFSIYTWKQSHRLLLLECLMSRSYLLNLHISNHFHPIDQHLVHCLSLCTIQKMI</sequence>
<gene>
    <name type="ordered locus">YOR231C-A</name>
</gene>
<proteinExistence type="uncertain"/>
<accession>Q8TGL2</accession>
<dbReference type="EMBL" id="Z75139">
    <property type="status" value="NOT_ANNOTATED_CDS"/>
    <property type="molecule type" value="Genomic_DNA"/>
</dbReference>
<dbReference type="EMBL" id="AF479980">
    <property type="protein sequence ID" value="AAL79293.1"/>
    <property type="molecule type" value="Genomic_DNA"/>
</dbReference>
<dbReference type="STRING" id="4932.YOR231C-A"/>
<dbReference type="PaxDb" id="4932-YOR231C-A"/>
<dbReference type="EnsemblFungi" id="YOR231C-A_mRNA">
    <property type="protein sequence ID" value="YOR231C-A"/>
    <property type="gene ID" value="YOR231C-A"/>
</dbReference>
<dbReference type="AGR" id="SGD:S000028716"/>
<dbReference type="SGD" id="S000028716">
    <property type="gene designation" value="YOR231C-A"/>
</dbReference>
<dbReference type="HOGENOM" id="CLU_2833122_0_0_1"/>
<reference key="1">
    <citation type="journal article" date="1997" name="Nature">
        <title>The nucleotide sequence of Saccharomyces cerevisiae chromosome XV.</title>
        <authorList>
            <person name="Dujon B."/>
            <person name="Albermann K."/>
            <person name="Aldea M."/>
            <person name="Alexandraki D."/>
            <person name="Ansorge W."/>
            <person name="Arino J."/>
            <person name="Benes V."/>
            <person name="Bohn C."/>
            <person name="Bolotin-Fukuhara M."/>
            <person name="Bordonne R."/>
            <person name="Boyer J."/>
            <person name="Camasses A."/>
            <person name="Casamayor A."/>
            <person name="Casas C."/>
            <person name="Cheret G."/>
            <person name="Cziepluch C."/>
            <person name="Daignan-Fornier B."/>
            <person name="Dang V.-D."/>
            <person name="de Haan M."/>
            <person name="Delius H."/>
            <person name="Durand P."/>
            <person name="Fairhead C."/>
            <person name="Feldmann H."/>
            <person name="Gaillon L."/>
            <person name="Galisson F."/>
            <person name="Gamo F.-J."/>
            <person name="Gancedo C."/>
            <person name="Goffeau A."/>
            <person name="Goulding S.E."/>
            <person name="Grivell L.A."/>
            <person name="Habbig B."/>
            <person name="Hand N.J."/>
            <person name="Hani J."/>
            <person name="Hattenhorst U."/>
            <person name="Hebling U."/>
            <person name="Hernando Y."/>
            <person name="Herrero E."/>
            <person name="Heumann K."/>
            <person name="Hiesel R."/>
            <person name="Hilger F."/>
            <person name="Hofmann B."/>
            <person name="Hollenberg C.P."/>
            <person name="Hughes B."/>
            <person name="Jauniaux J.-C."/>
            <person name="Kalogeropoulos A."/>
            <person name="Katsoulou C."/>
            <person name="Kordes E."/>
            <person name="Lafuente M.J."/>
            <person name="Landt O."/>
            <person name="Louis E.J."/>
            <person name="Maarse A.C."/>
            <person name="Madania A."/>
            <person name="Mannhaupt G."/>
            <person name="Marck C."/>
            <person name="Martin R.P."/>
            <person name="Mewes H.-W."/>
            <person name="Michaux G."/>
            <person name="Paces V."/>
            <person name="Parle-McDermott A.G."/>
            <person name="Pearson B.M."/>
            <person name="Perrin A."/>
            <person name="Pettersson B."/>
            <person name="Poch O."/>
            <person name="Pohl T.M."/>
            <person name="Poirey R."/>
            <person name="Portetelle D."/>
            <person name="Pujol A."/>
            <person name="Purnelle B."/>
            <person name="Ramezani Rad M."/>
            <person name="Rechmann S."/>
            <person name="Schwager C."/>
            <person name="Schweizer M."/>
            <person name="Sor F."/>
            <person name="Sterky F."/>
            <person name="Tarassov I.A."/>
            <person name="Teodoru C."/>
            <person name="Tettelin H."/>
            <person name="Thierry A."/>
            <person name="Tobiasch E."/>
            <person name="Tzermia M."/>
            <person name="Uhlen M."/>
            <person name="Unseld M."/>
            <person name="Valens M."/>
            <person name="Vandenbol M."/>
            <person name="Vetter I."/>
            <person name="Vlcek C."/>
            <person name="Voet M."/>
            <person name="Volckaert G."/>
            <person name="Voss H."/>
            <person name="Wambutt R."/>
            <person name="Wedler H."/>
            <person name="Wiemann S."/>
            <person name="Winsor B."/>
            <person name="Wolfe K.H."/>
            <person name="Zollner A."/>
            <person name="Zumstein E."/>
            <person name="Kleine K."/>
        </authorList>
    </citation>
    <scope>NUCLEOTIDE SEQUENCE [LARGE SCALE GENOMIC DNA]</scope>
    <source>
        <strain>ATCC 204508 / S288c</strain>
    </source>
</reference>
<reference key="2">
    <citation type="journal article" date="2014" name="G3 (Bethesda)">
        <title>The reference genome sequence of Saccharomyces cerevisiae: Then and now.</title>
        <authorList>
            <person name="Engel S.R."/>
            <person name="Dietrich F.S."/>
            <person name="Fisk D.G."/>
            <person name="Binkley G."/>
            <person name="Balakrishnan R."/>
            <person name="Costanzo M.C."/>
            <person name="Dwight S.S."/>
            <person name="Hitz B.C."/>
            <person name="Karra K."/>
            <person name="Nash R.S."/>
            <person name="Weng S."/>
            <person name="Wong E.D."/>
            <person name="Lloyd P."/>
            <person name="Skrzypek M.S."/>
            <person name="Miyasato S.R."/>
            <person name="Simison M."/>
            <person name="Cherry J.M."/>
        </authorList>
    </citation>
    <scope>GENOME REANNOTATION</scope>
    <source>
        <strain>ATCC 204508 / S288c</strain>
    </source>
</reference>
<reference key="3">
    <citation type="journal article" date="2002" name="Nat. Biotechnol.">
        <title>An integrated approach for finding overlooked genes in yeast.</title>
        <authorList>
            <person name="Kumar A."/>
            <person name="Harrison P.M."/>
            <person name="Cheung K.-H."/>
            <person name="Lan N."/>
            <person name="Echols N."/>
            <person name="Bertone P."/>
            <person name="Miller P."/>
            <person name="Gerstein M.B."/>
            <person name="Snyder M."/>
        </authorList>
    </citation>
    <scope>NUCLEOTIDE SEQUENCE [GENOMIC DNA]</scope>
</reference>
<organism>
    <name type="scientific">Saccharomyces cerevisiae (strain ATCC 204508 / S288c)</name>
    <name type="common">Baker's yeast</name>
    <dbReference type="NCBI Taxonomy" id="559292"/>
    <lineage>
        <taxon>Eukaryota</taxon>
        <taxon>Fungi</taxon>
        <taxon>Dikarya</taxon>
        <taxon>Ascomycota</taxon>
        <taxon>Saccharomycotina</taxon>
        <taxon>Saccharomycetes</taxon>
        <taxon>Saccharomycetales</taxon>
        <taxon>Saccharomycetaceae</taxon>
        <taxon>Saccharomyces</taxon>
    </lineage>
</organism>
<feature type="chain" id="PRO_0000299727" description="Putative uncharacterized protein YOR231C-A">
    <location>
        <begin position="1"/>
        <end position="66"/>
    </location>
</feature>
<name>YO231_YEAST</name>
<evidence type="ECO:0000305" key="1"/>
<evidence type="ECO:0000305" key="2">
    <source>
    </source>
</evidence>